<comment type="function">
    <text evidence="1">Catalyzes the phosphorylation of D-glycero-D-manno-heptose 7-phosphate at the C-1 position to selectively form D-glycero-beta-D-manno-heptose-1,7-bisphosphate.</text>
</comment>
<comment type="function">
    <text evidence="1">Catalyzes the ADP transfer from ATP to D-glycero-beta-D-manno-heptose 1-phosphate, yielding ADP-D-glycero-beta-D-manno-heptose.</text>
</comment>
<comment type="catalytic activity">
    <reaction evidence="1">
        <text>D-glycero-beta-D-manno-heptose 7-phosphate + ATP = D-glycero-beta-D-manno-heptose 1,7-bisphosphate + ADP + H(+)</text>
        <dbReference type="Rhea" id="RHEA:27473"/>
        <dbReference type="ChEBI" id="CHEBI:15378"/>
        <dbReference type="ChEBI" id="CHEBI:30616"/>
        <dbReference type="ChEBI" id="CHEBI:60204"/>
        <dbReference type="ChEBI" id="CHEBI:60208"/>
        <dbReference type="ChEBI" id="CHEBI:456216"/>
        <dbReference type="EC" id="2.7.1.167"/>
    </reaction>
</comment>
<comment type="catalytic activity">
    <reaction evidence="1">
        <text>D-glycero-beta-D-manno-heptose 1-phosphate + ATP + H(+) = ADP-D-glycero-beta-D-manno-heptose + diphosphate</text>
        <dbReference type="Rhea" id="RHEA:27465"/>
        <dbReference type="ChEBI" id="CHEBI:15378"/>
        <dbReference type="ChEBI" id="CHEBI:30616"/>
        <dbReference type="ChEBI" id="CHEBI:33019"/>
        <dbReference type="ChEBI" id="CHEBI:59967"/>
        <dbReference type="ChEBI" id="CHEBI:61593"/>
        <dbReference type="EC" id="2.7.7.70"/>
    </reaction>
</comment>
<comment type="pathway">
    <text evidence="1">Nucleotide-sugar biosynthesis; ADP-L-glycero-beta-D-manno-heptose biosynthesis; ADP-L-glycero-beta-D-manno-heptose from D-glycero-beta-D-manno-heptose 7-phosphate: step 1/4.</text>
</comment>
<comment type="pathway">
    <text evidence="1">Nucleotide-sugar biosynthesis; ADP-L-glycero-beta-D-manno-heptose biosynthesis; ADP-L-glycero-beta-D-manno-heptose from D-glycero-beta-D-manno-heptose 7-phosphate: step 3/4.</text>
</comment>
<comment type="subunit">
    <text evidence="1">Homodimer.</text>
</comment>
<comment type="similarity">
    <text evidence="1">In the N-terminal section; belongs to the carbohydrate kinase PfkB family.</text>
</comment>
<comment type="similarity">
    <text evidence="1">In the C-terminal section; belongs to the cytidylyltransferase family.</text>
</comment>
<protein>
    <recommendedName>
        <fullName evidence="1">Bifunctional protein HldE</fullName>
    </recommendedName>
    <domain>
        <recommendedName>
            <fullName evidence="1">D-beta-D-heptose 7-phosphate kinase</fullName>
            <ecNumber evidence="1">2.7.1.167</ecNumber>
        </recommendedName>
        <alternativeName>
            <fullName evidence="1">D-beta-D-heptose 7-phosphotransferase</fullName>
        </alternativeName>
        <alternativeName>
            <fullName evidence="1">D-glycero-beta-D-manno-heptose-7-phosphate kinase</fullName>
        </alternativeName>
    </domain>
    <domain>
        <recommendedName>
            <fullName evidence="1">D-beta-D-heptose 1-phosphate adenylyltransferase</fullName>
            <ecNumber evidence="1">2.7.7.70</ecNumber>
        </recommendedName>
        <alternativeName>
            <fullName evidence="1">D-glycero-beta-D-manno-heptose 1-phosphate adenylyltransferase</fullName>
        </alternativeName>
    </domain>
</protein>
<name>HLDE_ECO8A</name>
<keyword id="KW-0007">Acetylation</keyword>
<keyword id="KW-0067">ATP-binding</keyword>
<keyword id="KW-0119">Carbohydrate metabolism</keyword>
<keyword id="KW-0418">Kinase</keyword>
<keyword id="KW-0511">Multifunctional enzyme</keyword>
<keyword id="KW-0547">Nucleotide-binding</keyword>
<keyword id="KW-0548">Nucleotidyltransferase</keyword>
<keyword id="KW-0808">Transferase</keyword>
<evidence type="ECO:0000255" key="1">
    <source>
        <dbReference type="HAMAP-Rule" id="MF_01603"/>
    </source>
</evidence>
<proteinExistence type="inferred from homology"/>
<organism>
    <name type="scientific">Escherichia coli O8 (strain IAI1)</name>
    <dbReference type="NCBI Taxonomy" id="585034"/>
    <lineage>
        <taxon>Bacteria</taxon>
        <taxon>Pseudomonadati</taxon>
        <taxon>Pseudomonadota</taxon>
        <taxon>Gammaproteobacteria</taxon>
        <taxon>Enterobacterales</taxon>
        <taxon>Enterobacteriaceae</taxon>
        <taxon>Escherichia</taxon>
    </lineage>
</organism>
<gene>
    <name evidence="1" type="primary">hldE</name>
    <name type="ordered locus">ECIAI1_3199</name>
</gene>
<sequence length="477" mass="51051">MKVTLPEFERAGVMVVGDVMLDRYWYGPTSRISPEAPVPVVKVNTIEERPGGAANVAMNIASLGANARLVGLTGIDDAARALSKSLADVNVKCDFVSVPTHPTITKLRVLSRNQQLIRLDFEEGFEGVDPQPLHERINQALSSIGALVLSDYAKGALASVQQMIQLARKAGVPVLIDPKGTDFERYRGATLLTPNLSEFEAVVGKCKTEEEIVERGMKLIADYELSALLVTRSEQGMSLLQPGKAPLHMPTQAQEVYDVTGAGDTVIGVLAATLAAGNSLEEACFFANAAAGVVVGKLGTSTVSPIELENAVRGRADTGFGVMTEEELKLAVAAARKRGEKVVMTNGVFDILHAGHVSYLANARKLGDRLIVAVNSDASTKRLKGDSRPVNPLEQRMIVLGALEAVDWVVSFEEDTPQRLIAGILPDLLVKGGDYKPEEIAGSKEVWANGGEVLVLNFEDGCSTTNIIKKIQQDKKG</sequence>
<reference key="1">
    <citation type="journal article" date="2009" name="PLoS Genet.">
        <title>Organised genome dynamics in the Escherichia coli species results in highly diverse adaptive paths.</title>
        <authorList>
            <person name="Touchon M."/>
            <person name="Hoede C."/>
            <person name="Tenaillon O."/>
            <person name="Barbe V."/>
            <person name="Baeriswyl S."/>
            <person name="Bidet P."/>
            <person name="Bingen E."/>
            <person name="Bonacorsi S."/>
            <person name="Bouchier C."/>
            <person name="Bouvet O."/>
            <person name="Calteau A."/>
            <person name="Chiapello H."/>
            <person name="Clermont O."/>
            <person name="Cruveiller S."/>
            <person name="Danchin A."/>
            <person name="Diard M."/>
            <person name="Dossat C."/>
            <person name="Karoui M.E."/>
            <person name="Frapy E."/>
            <person name="Garry L."/>
            <person name="Ghigo J.M."/>
            <person name="Gilles A.M."/>
            <person name="Johnson J."/>
            <person name="Le Bouguenec C."/>
            <person name="Lescat M."/>
            <person name="Mangenot S."/>
            <person name="Martinez-Jehanne V."/>
            <person name="Matic I."/>
            <person name="Nassif X."/>
            <person name="Oztas S."/>
            <person name="Petit M.A."/>
            <person name="Pichon C."/>
            <person name="Rouy Z."/>
            <person name="Ruf C.S."/>
            <person name="Schneider D."/>
            <person name="Tourret J."/>
            <person name="Vacherie B."/>
            <person name="Vallenet D."/>
            <person name="Medigue C."/>
            <person name="Rocha E.P.C."/>
            <person name="Denamur E."/>
        </authorList>
    </citation>
    <scope>NUCLEOTIDE SEQUENCE [LARGE SCALE GENOMIC DNA]</scope>
    <source>
        <strain>IAI1</strain>
    </source>
</reference>
<dbReference type="EC" id="2.7.1.167" evidence="1"/>
<dbReference type="EC" id="2.7.7.70" evidence="1"/>
<dbReference type="EMBL" id="CU928160">
    <property type="protein sequence ID" value="CAR00013.1"/>
    <property type="molecule type" value="Genomic_DNA"/>
</dbReference>
<dbReference type="RefSeq" id="WP_000869178.1">
    <property type="nucleotide sequence ID" value="NC_011741.1"/>
</dbReference>
<dbReference type="SMR" id="B7LZK1"/>
<dbReference type="GeneID" id="75205361"/>
<dbReference type="KEGG" id="ecr:ECIAI1_3199"/>
<dbReference type="HOGENOM" id="CLU_021150_2_1_6"/>
<dbReference type="UniPathway" id="UPA00356">
    <property type="reaction ID" value="UER00437"/>
</dbReference>
<dbReference type="UniPathway" id="UPA00356">
    <property type="reaction ID" value="UER00439"/>
</dbReference>
<dbReference type="GO" id="GO:0005829">
    <property type="term" value="C:cytosol"/>
    <property type="evidence" value="ECO:0007669"/>
    <property type="project" value="TreeGrafter"/>
</dbReference>
<dbReference type="GO" id="GO:0005524">
    <property type="term" value="F:ATP binding"/>
    <property type="evidence" value="ECO:0007669"/>
    <property type="project" value="UniProtKB-UniRule"/>
</dbReference>
<dbReference type="GO" id="GO:0033785">
    <property type="term" value="F:heptose 7-phosphate kinase activity"/>
    <property type="evidence" value="ECO:0007669"/>
    <property type="project" value="UniProtKB-UniRule"/>
</dbReference>
<dbReference type="GO" id="GO:0033786">
    <property type="term" value="F:heptose-1-phosphate adenylyltransferase activity"/>
    <property type="evidence" value="ECO:0007669"/>
    <property type="project" value="UniProtKB-UniRule"/>
</dbReference>
<dbReference type="GO" id="GO:0016773">
    <property type="term" value="F:phosphotransferase activity, alcohol group as acceptor"/>
    <property type="evidence" value="ECO:0007669"/>
    <property type="project" value="InterPro"/>
</dbReference>
<dbReference type="GO" id="GO:0097171">
    <property type="term" value="P:ADP-L-glycero-beta-D-manno-heptose biosynthetic process"/>
    <property type="evidence" value="ECO:0007669"/>
    <property type="project" value="UniProtKB-UniPathway"/>
</dbReference>
<dbReference type="CDD" id="cd01172">
    <property type="entry name" value="RfaE_like"/>
    <property type="match status" value="1"/>
</dbReference>
<dbReference type="FunFam" id="3.40.1190.20:FF:000002">
    <property type="entry name" value="Bifunctional protein HldE"/>
    <property type="match status" value="1"/>
</dbReference>
<dbReference type="FunFam" id="3.40.50.620:FF:000028">
    <property type="entry name" value="Bifunctional protein HldE"/>
    <property type="match status" value="1"/>
</dbReference>
<dbReference type="Gene3D" id="3.40.1190.20">
    <property type="match status" value="1"/>
</dbReference>
<dbReference type="Gene3D" id="3.40.50.620">
    <property type="entry name" value="HUPs"/>
    <property type="match status" value="1"/>
</dbReference>
<dbReference type="HAMAP" id="MF_01603">
    <property type="entry name" value="HldE"/>
    <property type="match status" value="1"/>
</dbReference>
<dbReference type="InterPro" id="IPR023030">
    <property type="entry name" value="Bifunc_HldE"/>
</dbReference>
<dbReference type="InterPro" id="IPR002173">
    <property type="entry name" value="Carboh/pur_kinase_PfkB_CS"/>
</dbReference>
<dbReference type="InterPro" id="IPR004821">
    <property type="entry name" value="Cyt_trans-like"/>
</dbReference>
<dbReference type="InterPro" id="IPR011611">
    <property type="entry name" value="PfkB_dom"/>
</dbReference>
<dbReference type="InterPro" id="IPR011913">
    <property type="entry name" value="RfaE_dom_I"/>
</dbReference>
<dbReference type="InterPro" id="IPR011914">
    <property type="entry name" value="RfaE_dom_II"/>
</dbReference>
<dbReference type="InterPro" id="IPR029056">
    <property type="entry name" value="Ribokinase-like"/>
</dbReference>
<dbReference type="InterPro" id="IPR014729">
    <property type="entry name" value="Rossmann-like_a/b/a_fold"/>
</dbReference>
<dbReference type="NCBIfam" id="TIGR00125">
    <property type="entry name" value="cyt_tran_rel"/>
    <property type="match status" value="1"/>
</dbReference>
<dbReference type="NCBIfam" id="NF008454">
    <property type="entry name" value="PRK11316.1"/>
    <property type="match status" value="1"/>
</dbReference>
<dbReference type="NCBIfam" id="TIGR02198">
    <property type="entry name" value="rfaE_dom_I"/>
    <property type="match status" value="1"/>
</dbReference>
<dbReference type="NCBIfam" id="TIGR02199">
    <property type="entry name" value="rfaE_dom_II"/>
    <property type="match status" value="1"/>
</dbReference>
<dbReference type="PANTHER" id="PTHR46969">
    <property type="entry name" value="BIFUNCTIONAL PROTEIN HLDE"/>
    <property type="match status" value="1"/>
</dbReference>
<dbReference type="PANTHER" id="PTHR46969:SF1">
    <property type="entry name" value="BIFUNCTIONAL PROTEIN HLDE"/>
    <property type="match status" value="1"/>
</dbReference>
<dbReference type="Pfam" id="PF01467">
    <property type="entry name" value="CTP_transf_like"/>
    <property type="match status" value="1"/>
</dbReference>
<dbReference type="Pfam" id="PF00294">
    <property type="entry name" value="PfkB"/>
    <property type="match status" value="1"/>
</dbReference>
<dbReference type="SUPFAM" id="SSF52374">
    <property type="entry name" value="Nucleotidylyl transferase"/>
    <property type="match status" value="1"/>
</dbReference>
<dbReference type="SUPFAM" id="SSF53613">
    <property type="entry name" value="Ribokinase-like"/>
    <property type="match status" value="1"/>
</dbReference>
<dbReference type="PROSITE" id="PS00583">
    <property type="entry name" value="PFKB_KINASES_1"/>
    <property type="match status" value="1"/>
</dbReference>
<feature type="chain" id="PRO_1000185805" description="Bifunctional protein HldE">
    <location>
        <begin position="1"/>
        <end position="477"/>
    </location>
</feature>
<feature type="region of interest" description="Ribokinase">
    <location>
        <begin position="1"/>
        <end position="318"/>
    </location>
</feature>
<feature type="region of interest" description="Cytidylyltransferase">
    <location>
        <begin position="344"/>
        <end position="477"/>
    </location>
</feature>
<feature type="active site" evidence="1">
    <location>
        <position position="264"/>
    </location>
</feature>
<feature type="binding site" evidence="1">
    <location>
        <begin position="195"/>
        <end position="198"/>
    </location>
    <ligand>
        <name>ATP</name>
        <dbReference type="ChEBI" id="CHEBI:30616"/>
    </ligand>
</feature>
<feature type="modified residue" description="N6-acetyllysine" evidence="1">
    <location>
        <position position="179"/>
    </location>
</feature>
<accession>B7LZK1</accession>